<accession>Q2A268</accession>
<protein>
    <recommendedName>
        <fullName evidence="1">Small ribosomal subunit protein uS15</fullName>
    </recommendedName>
    <alternativeName>
        <fullName evidence="2">30S ribosomal protein S15</fullName>
    </alternativeName>
</protein>
<reference key="1">
    <citation type="submission" date="2006-03" db="EMBL/GenBank/DDBJ databases">
        <title>Complete genome sequence of Francisella tularensis LVS (Live Vaccine Strain).</title>
        <authorList>
            <person name="Chain P."/>
            <person name="Larimer F."/>
            <person name="Land M."/>
            <person name="Stilwagen S."/>
            <person name="Larsson P."/>
            <person name="Bearden S."/>
            <person name="Chu M."/>
            <person name="Oyston P."/>
            <person name="Forsman M."/>
            <person name="Andersson S."/>
            <person name="Lindler L."/>
            <person name="Titball R."/>
            <person name="Garcia E."/>
        </authorList>
    </citation>
    <scope>NUCLEOTIDE SEQUENCE [LARGE SCALE GENOMIC DNA]</scope>
    <source>
        <strain>LVS</strain>
    </source>
</reference>
<sequence length="88" mass="10359">MLTAQDKQKIIKENQLAESDTGSPEVQVALLTARINDLKGHFEAHKKDNHSRRGLLRLVSQRRKLLDYLHDKDVERYRSLIKKLNIRR</sequence>
<keyword id="KW-1185">Reference proteome</keyword>
<keyword id="KW-0687">Ribonucleoprotein</keyword>
<keyword id="KW-0689">Ribosomal protein</keyword>
<keyword id="KW-0694">RNA-binding</keyword>
<keyword id="KW-0699">rRNA-binding</keyword>
<feature type="chain" id="PRO_0000255495" description="Small ribosomal subunit protein uS15">
    <location>
        <begin position="1"/>
        <end position="88"/>
    </location>
</feature>
<name>RS15_FRATH</name>
<organism>
    <name type="scientific">Francisella tularensis subsp. holarctica (strain LVS)</name>
    <dbReference type="NCBI Taxonomy" id="376619"/>
    <lineage>
        <taxon>Bacteria</taxon>
        <taxon>Pseudomonadati</taxon>
        <taxon>Pseudomonadota</taxon>
        <taxon>Gammaproteobacteria</taxon>
        <taxon>Thiotrichales</taxon>
        <taxon>Francisellaceae</taxon>
        <taxon>Francisella</taxon>
    </lineage>
</organism>
<comment type="function">
    <text evidence="1">One of the primary rRNA binding proteins, it binds directly to 16S rRNA where it helps nucleate assembly of the platform of the 30S subunit by binding and bridging several RNA helices of the 16S rRNA.</text>
</comment>
<comment type="function">
    <text evidence="1">Forms an intersubunit bridge (bridge B4) with the 23S rRNA of the 50S subunit in the ribosome.</text>
</comment>
<comment type="subunit">
    <text evidence="1">Part of the 30S ribosomal subunit. Forms a bridge to the 50S subunit in the 70S ribosome, contacting the 23S rRNA.</text>
</comment>
<comment type="similarity">
    <text evidence="1">Belongs to the universal ribosomal protein uS15 family.</text>
</comment>
<proteinExistence type="inferred from homology"/>
<gene>
    <name evidence="1" type="primary">rpsO</name>
    <name type="ordered locus">FTL_1538</name>
</gene>
<evidence type="ECO:0000255" key="1">
    <source>
        <dbReference type="HAMAP-Rule" id="MF_01343"/>
    </source>
</evidence>
<evidence type="ECO:0000305" key="2"/>
<dbReference type="EMBL" id="AM233362">
    <property type="protein sequence ID" value="CAJ79977.1"/>
    <property type="molecule type" value="Genomic_DNA"/>
</dbReference>
<dbReference type="RefSeq" id="WP_003016883.1">
    <property type="nucleotide sequence ID" value="NZ_CP009694.1"/>
</dbReference>
<dbReference type="SMR" id="Q2A268"/>
<dbReference type="KEGG" id="ftl:FTL_1538"/>
<dbReference type="Proteomes" id="UP000001944">
    <property type="component" value="Chromosome"/>
</dbReference>
<dbReference type="GO" id="GO:0022627">
    <property type="term" value="C:cytosolic small ribosomal subunit"/>
    <property type="evidence" value="ECO:0007669"/>
    <property type="project" value="TreeGrafter"/>
</dbReference>
<dbReference type="GO" id="GO:0019843">
    <property type="term" value="F:rRNA binding"/>
    <property type="evidence" value="ECO:0007669"/>
    <property type="project" value="UniProtKB-UniRule"/>
</dbReference>
<dbReference type="GO" id="GO:0003735">
    <property type="term" value="F:structural constituent of ribosome"/>
    <property type="evidence" value="ECO:0007669"/>
    <property type="project" value="InterPro"/>
</dbReference>
<dbReference type="GO" id="GO:0006412">
    <property type="term" value="P:translation"/>
    <property type="evidence" value="ECO:0007669"/>
    <property type="project" value="UniProtKB-UniRule"/>
</dbReference>
<dbReference type="CDD" id="cd00353">
    <property type="entry name" value="Ribosomal_S15p_S13e"/>
    <property type="match status" value="1"/>
</dbReference>
<dbReference type="FunFam" id="1.10.287.10:FF:000002">
    <property type="entry name" value="30S ribosomal protein S15"/>
    <property type="match status" value="1"/>
</dbReference>
<dbReference type="Gene3D" id="6.10.250.3130">
    <property type="match status" value="1"/>
</dbReference>
<dbReference type="Gene3D" id="1.10.287.10">
    <property type="entry name" value="S15/NS1, RNA-binding"/>
    <property type="match status" value="1"/>
</dbReference>
<dbReference type="HAMAP" id="MF_01343_B">
    <property type="entry name" value="Ribosomal_uS15_B"/>
    <property type="match status" value="1"/>
</dbReference>
<dbReference type="InterPro" id="IPR000589">
    <property type="entry name" value="Ribosomal_uS15"/>
</dbReference>
<dbReference type="InterPro" id="IPR005290">
    <property type="entry name" value="Ribosomal_uS15_bac-type"/>
</dbReference>
<dbReference type="InterPro" id="IPR009068">
    <property type="entry name" value="uS15_NS1_RNA-bd_sf"/>
</dbReference>
<dbReference type="NCBIfam" id="TIGR00952">
    <property type="entry name" value="S15_bact"/>
    <property type="match status" value="1"/>
</dbReference>
<dbReference type="PANTHER" id="PTHR23321">
    <property type="entry name" value="RIBOSOMAL PROTEIN S15, BACTERIAL AND ORGANELLAR"/>
    <property type="match status" value="1"/>
</dbReference>
<dbReference type="PANTHER" id="PTHR23321:SF26">
    <property type="entry name" value="SMALL RIBOSOMAL SUBUNIT PROTEIN US15M"/>
    <property type="match status" value="1"/>
</dbReference>
<dbReference type="Pfam" id="PF00312">
    <property type="entry name" value="Ribosomal_S15"/>
    <property type="match status" value="1"/>
</dbReference>
<dbReference type="SMART" id="SM01387">
    <property type="entry name" value="Ribosomal_S15"/>
    <property type="match status" value="1"/>
</dbReference>
<dbReference type="SUPFAM" id="SSF47060">
    <property type="entry name" value="S15/NS1 RNA-binding domain"/>
    <property type="match status" value="1"/>
</dbReference>
<dbReference type="PROSITE" id="PS00362">
    <property type="entry name" value="RIBOSOMAL_S15"/>
    <property type="match status" value="1"/>
</dbReference>